<sequence>MYLRKISAPLMTMLLLNGCAYIPHKPLVDGTTSAQPAPASAPLPNGSIFQTVQPMNYGYQPLFEDRRPRNIGDTLTITLQENVSASKSSSANASRNGTSSFGVTTAPRYLDGLLGNGRADMEITGDNTFGGKGGANANNTFSGTITVTVDQVLANGNLHVVGEKQIAINQGTEFIRFSGVVNPRTISGSNSVTSTQVADARIEYVGNGYINEAQTMGWLQRFFLNVSPY</sequence>
<dbReference type="EMBL" id="BX936398">
    <property type="protein sequence ID" value="CAH20917.1"/>
    <property type="molecule type" value="Genomic_DNA"/>
</dbReference>
<dbReference type="SMR" id="Q66BT9"/>
<dbReference type="KEGG" id="yps:YPTB1678"/>
<dbReference type="Proteomes" id="UP000001011">
    <property type="component" value="Chromosome"/>
</dbReference>
<dbReference type="GO" id="GO:0009427">
    <property type="term" value="C:bacterial-type flagellum basal body, distal rod, L ring"/>
    <property type="evidence" value="ECO:0007669"/>
    <property type="project" value="InterPro"/>
</dbReference>
<dbReference type="GO" id="GO:0009279">
    <property type="term" value="C:cell outer membrane"/>
    <property type="evidence" value="ECO:0007669"/>
    <property type="project" value="UniProtKB-SubCell"/>
</dbReference>
<dbReference type="GO" id="GO:0003774">
    <property type="term" value="F:cytoskeletal motor activity"/>
    <property type="evidence" value="ECO:0007669"/>
    <property type="project" value="InterPro"/>
</dbReference>
<dbReference type="GO" id="GO:0071973">
    <property type="term" value="P:bacterial-type flagellum-dependent cell motility"/>
    <property type="evidence" value="ECO:0007669"/>
    <property type="project" value="InterPro"/>
</dbReference>
<dbReference type="HAMAP" id="MF_00415">
    <property type="entry name" value="FlgH"/>
    <property type="match status" value="1"/>
</dbReference>
<dbReference type="InterPro" id="IPR000527">
    <property type="entry name" value="Flag_Lring"/>
</dbReference>
<dbReference type="NCBIfam" id="NF001301">
    <property type="entry name" value="PRK00249.1-1"/>
    <property type="match status" value="1"/>
</dbReference>
<dbReference type="PANTHER" id="PTHR34933">
    <property type="entry name" value="FLAGELLAR L-RING PROTEIN"/>
    <property type="match status" value="1"/>
</dbReference>
<dbReference type="PANTHER" id="PTHR34933:SF3">
    <property type="entry name" value="FLAGELLAR L-RING PROTEIN"/>
    <property type="match status" value="1"/>
</dbReference>
<dbReference type="Pfam" id="PF02107">
    <property type="entry name" value="FlgH"/>
    <property type="match status" value="1"/>
</dbReference>
<dbReference type="PRINTS" id="PR01008">
    <property type="entry name" value="FLGLRINGFLGH"/>
</dbReference>
<organism>
    <name type="scientific">Yersinia pseudotuberculosis serotype I (strain IP32953)</name>
    <dbReference type="NCBI Taxonomy" id="273123"/>
    <lineage>
        <taxon>Bacteria</taxon>
        <taxon>Pseudomonadati</taxon>
        <taxon>Pseudomonadota</taxon>
        <taxon>Gammaproteobacteria</taxon>
        <taxon>Enterobacterales</taxon>
        <taxon>Yersiniaceae</taxon>
        <taxon>Yersinia</taxon>
    </lineage>
</organism>
<feature type="signal peptide" evidence="2">
    <location>
        <begin position="1"/>
        <end position="18"/>
    </location>
</feature>
<feature type="chain" id="PRO_0000009489" description="Flagellar L-ring protein 1">
    <location>
        <begin position="19"/>
        <end position="229"/>
    </location>
</feature>
<feature type="lipid moiety-binding region" description="N-palmitoyl cysteine" evidence="2">
    <location>
        <position position="19"/>
    </location>
</feature>
<feature type="lipid moiety-binding region" description="S-diacylglycerol cysteine" evidence="2">
    <location>
        <position position="19"/>
    </location>
</feature>
<accession>Q66BT9</accession>
<protein>
    <recommendedName>
        <fullName>Flagellar L-ring protein 1</fullName>
    </recommendedName>
    <alternativeName>
        <fullName>Basal body L-ring protein 1</fullName>
    </alternativeName>
</protein>
<reference key="1">
    <citation type="journal article" date="2004" name="Proc. Natl. Acad. Sci. U.S.A.">
        <title>Insights into the evolution of Yersinia pestis through whole-genome comparison with Yersinia pseudotuberculosis.</title>
        <authorList>
            <person name="Chain P.S.G."/>
            <person name="Carniel E."/>
            <person name="Larimer F.W."/>
            <person name="Lamerdin J."/>
            <person name="Stoutland P.O."/>
            <person name="Regala W.M."/>
            <person name="Georgescu A.M."/>
            <person name="Vergez L.M."/>
            <person name="Land M.L."/>
            <person name="Motin V.L."/>
            <person name="Brubaker R.R."/>
            <person name="Fowler J."/>
            <person name="Hinnebusch J."/>
            <person name="Marceau M."/>
            <person name="Medigue C."/>
            <person name="Simonet M."/>
            <person name="Chenal-Francisque V."/>
            <person name="Souza B."/>
            <person name="Dacheux D."/>
            <person name="Elliott J.M."/>
            <person name="Derbise A."/>
            <person name="Hauser L.J."/>
            <person name="Garcia E."/>
        </authorList>
    </citation>
    <scope>NUCLEOTIDE SEQUENCE [LARGE SCALE GENOMIC DNA]</scope>
    <source>
        <strain>IP32953</strain>
    </source>
</reference>
<evidence type="ECO:0000250" key="1"/>
<evidence type="ECO:0000255" key="2"/>
<evidence type="ECO:0000305" key="3"/>
<keyword id="KW-0975">Bacterial flagellum</keyword>
<keyword id="KW-0998">Cell outer membrane</keyword>
<keyword id="KW-0449">Lipoprotein</keyword>
<keyword id="KW-0472">Membrane</keyword>
<keyword id="KW-0564">Palmitate</keyword>
<keyword id="KW-0732">Signal</keyword>
<name>FLGH1_YERPS</name>
<proteinExistence type="inferred from homology"/>
<gene>
    <name type="primary">flgH1</name>
    <name type="ordered locus">YPTB1678</name>
</gene>
<comment type="function">
    <text evidence="1">Assembles around the rod to form the L-ring and probably protects the motor/basal body from shearing forces during rotation.</text>
</comment>
<comment type="subunit">
    <text evidence="1">The basal body constitutes a major portion of the flagellar organelle and consists of four rings (L,P,S, and M) mounted on a central rod.</text>
</comment>
<comment type="subcellular location">
    <subcellularLocation>
        <location evidence="1">Cell outer membrane</location>
        <topology evidence="1">Lipid-anchor</topology>
    </subcellularLocation>
    <subcellularLocation>
        <location evidence="1">Bacterial flagellum basal body</location>
    </subcellularLocation>
</comment>
<comment type="similarity">
    <text evidence="3">Belongs to the FlgH family.</text>
</comment>